<feature type="chain" id="PRO_1000138307" description="UPF0434 protein YcaR">
    <location>
        <begin position="1"/>
        <end position="60"/>
    </location>
</feature>
<dbReference type="EMBL" id="CU928163">
    <property type="protein sequence ID" value="CAR12319.1"/>
    <property type="molecule type" value="Genomic_DNA"/>
</dbReference>
<dbReference type="RefSeq" id="WP_000350058.1">
    <property type="nucleotide sequence ID" value="NC_011751.1"/>
</dbReference>
<dbReference type="RefSeq" id="YP_002411863.1">
    <property type="nucleotide sequence ID" value="NC_011751.1"/>
</dbReference>
<dbReference type="SMR" id="B7NAR6"/>
<dbReference type="STRING" id="585056.ECUMN_1110"/>
<dbReference type="GeneID" id="93776498"/>
<dbReference type="KEGG" id="eum:ECUMN_1110"/>
<dbReference type="PATRIC" id="fig|585056.7.peg.1305"/>
<dbReference type="HOGENOM" id="CLU_155659_3_1_6"/>
<dbReference type="Proteomes" id="UP000007097">
    <property type="component" value="Chromosome"/>
</dbReference>
<dbReference type="GO" id="GO:0005829">
    <property type="term" value="C:cytosol"/>
    <property type="evidence" value="ECO:0007669"/>
    <property type="project" value="TreeGrafter"/>
</dbReference>
<dbReference type="FunFam" id="2.20.25.10:FF:000002">
    <property type="entry name" value="UPF0434 protein YcaR"/>
    <property type="match status" value="1"/>
</dbReference>
<dbReference type="Gene3D" id="2.20.25.10">
    <property type="match status" value="1"/>
</dbReference>
<dbReference type="HAMAP" id="MF_01187">
    <property type="entry name" value="UPF0434"/>
    <property type="match status" value="1"/>
</dbReference>
<dbReference type="InterPro" id="IPR005651">
    <property type="entry name" value="Trm112-like"/>
</dbReference>
<dbReference type="NCBIfam" id="NF008806">
    <property type="entry name" value="PRK11827.1"/>
    <property type="match status" value="1"/>
</dbReference>
<dbReference type="PANTHER" id="PTHR33505:SF4">
    <property type="entry name" value="PROTEIN PREY, MITOCHONDRIAL"/>
    <property type="match status" value="1"/>
</dbReference>
<dbReference type="PANTHER" id="PTHR33505">
    <property type="entry name" value="ZGC:162634"/>
    <property type="match status" value="1"/>
</dbReference>
<dbReference type="Pfam" id="PF03966">
    <property type="entry name" value="Trm112p"/>
    <property type="match status" value="1"/>
</dbReference>
<dbReference type="SUPFAM" id="SSF158997">
    <property type="entry name" value="Trm112p-like"/>
    <property type="match status" value="1"/>
</dbReference>
<comment type="similarity">
    <text evidence="1">Belongs to the UPF0434 family.</text>
</comment>
<accession>B7NAR6</accession>
<evidence type="ECO:0000255" key="1">
    <source>
        <dbReference type="HAMAP-Rule" id="MF_01187"/>
    </source>
</evidence>
<organism>
    <name type="scientific">Escherichia coli O17:K52:H18 (strain UMN026 / ExPEC)</name>
    <dbReference type="NCBI Taxonomy" id="585056"/>
    <lineage>
        <taxon>Bacteria</taxon>
        <taxon>Pseudomonadati</taxon>
        <taxon>Pseudomonadota</taxon>
        <taxon>Gammaproteobacteria</taxon>
        <taxon>Enterobacterales</taxon>
        <taxon>Enterobacteriaceae</taxon>
        <taxon>Escherichia</taxon>
    </lineage>
</organism>
<reference key="1">
    <citation type="journal article" date="2009" name="PLoS Genet.">
        <title>Organised genome dynamics in the Escherichia coli species results in highly diverse adaptive paths.</title>
        <authorList>
            <person name="Touchon M."/>
            <person name="Hoede C."/>
            <person name="Tenaillon O."/>
            <person name="Barbe V."/>
            <person name="Baeriswyl S."/>
            <person name="Bidet P."/>
            <person name="Bingen E."/>
            <person name="Bonacorsi S."/>
            <person name="Bouchier C."/>
            <person name="Bouvet O."/>
            <person name="Calteau A."/>
            <person name="Chiapello H."/>
            <person name="Clermont O."/>
            <person name="Cruveiller S."/>
            <person name="Danchin A."/>
            <person name="Diard M."/>
            <person name="Dossat C."/>
            <person name="Karoui M.E."/>
            <person name="Frapy E."/>
            <person name="Garry L."/>
            <person name="Ghigo J.M."/>
            <person name="Gilles A.M."/>
            <person name="Johnson J."/>
            <person name="Le Bouguenec C."/>
            <person name="Lescat M."/>
            <person name="Mangenot S."/>
            <person name="Martinez-Jehanne V."/>
            <person name="Matic I."/>
            <person name="Nassif X."/>
            <person name="Oztas S."/>
            <person name="Petit M.A."/>
            <person name="Pichon C."/>
            <person name="Rouy Z."/>
            <person name="Ruf C.S."/>
            <person name="Schneider D."/>
            <person name="Tourret J."/>
            <person name="Vacherie B."/>
            <person name="Vallenet D."/>
            <person name="Medigue C."/>
            <person name="Rocha E.P.C."/>
            <person name="Denamur E."/>
        </authorList>
    </citation>
    <scope>NUCLEOTIDE SEQUENCE [LARGE SCALE GENOMIC DNA]</scope>
    <source>
        <strain>UMN026 / ExPEC</strain>
    </source>
</reference>
<protein>
    <recommendedName>
        <fullName evidence="1">UPF0434 protein YcaR</fullName>
    </recommendedName>
</protein>
<sequence>MDHRLLEIIACPVCNGKLWYNQEKQELICKLDNLAFPLRDGIPVLLETEARVLTADESKS</sequence>
<name>YCAR_ECOLU</name>
<gene>
    <name evidence="1" type="primary">ycaR</name>
    <name type="ordered locus">ECUMN_1110</name>
</gene>
<proteinExistence type="inferred from homology"/>